<gene>
    <name evidence="1" type="primary">rplB</name>
    <name type="ordered locus">Sputw3181_0159</name>
</gene>
<protein>
    <recommendedName>
        <fullName evidence="1">Large ribosomal subunit protein uL2</fullName>
    </recommendedName>
    <alternativeName>
        <fullName evidence="3">50S ribosomal protein L2</fullName>
    </alternativeName>
</protein>
<accession>A1REB7</accession>
<reference key="1">
    <citation type="submission" date="2006-12" db="EMBL/GenBank/DDBJ databases">
        <title>Complete sequence of Shewanella sp. W3-18-1.</title>
        <authorList>
            <consortium name="US DOE Joint Genome Institute"/>
            <person name="Copeland A."/>
            <person name="Lucas S."/>
            <person name="Lapidus A."/>
            <person name="Barry K."/>
            <person name="Detter J.C."/>
            <person name="Glavina del Rio T."/>
            <person name="Hammon N."/>
            <person name="Israni S."/>
            <person name="Dalin E."/>
            <person name="Tice H."/>
            <person name="Pitluck S."/>
            <person name="Chain P."/>
            <person name="Malfatti S."/>
            <person name="Shin M."/>
            <person name="Vergez L."/>
            <person name="Schmutz J."/>
            <person name="Larimer F."/>
            <person name="Land M."/>
            <person name="Hauser L."/>
            <person name="Kyrpides N."/>
            <person name="Lykidis A."/>
            <person name="Tiedje J."/>
            <person name="Richardson P."/>
        </authorList>
    </citation>
    <scope>NUCLEOTIDE SEQUENCE [LARGE SCALE GENOMIC DNA]</scope>
    <source>
        <strain>W3-18-1</strain>
    </source>
</reference>
<feature type="chain" id="PRO_0000310015" description="Large ribosomal subunit protein uL2">
    <location>
        <begin position="1"/>
        <end position="274"/>
    </location>
</feature>
<feature type="region of interest" description="Disordered" evidence="2">
    <location>
        <begin position="223"/>
        <end position="274"/>
    </location>
</feature>
<name>RL2_SHESW</name>
<keyword id="KW-0687">Ribonucleoprotein</keyword>
<keyword id="KW-0689">Ribosomal protein</keyword>
<keyword id="KW-0694">RNA-binding</keyword>
<keyword id="KW-0699">rRNA-binding</keyword>
<dbReference type="EMBL" id="CP000503">
    <property type="protein sequence ID" value="ABM23012.1"/>
    <property type="molecule type" value="Genomic_DNA"/>
</dbReference>
<dbReference type="RefSeq" id="WP_011787573.1">
    <property type="nucleotide sequence ID" value="NC_008750.1"/>
</dbReference>
<dbReference type="SMR" id="A1REB7"/>
<dbReference type="GeneID" id="67441763"/>
<dbReference type="KEGG" id="shw:Sputw3181_0159"/>
<dbReference type="HOGENOM" id="CLU_036235_2_1_6"/>
<dbReference type="Proteomes" id="UP000002597">
    <property type="component" value="Chromosome"/>
</dbReference>
<dbReference type="GO" id="GO:0015934">
    <property type="term" value="C:large ribosomal subunit"/>
    <property type="evidence" value="ECO:0007669"/>
    <property type="project" value="InterPro"/>
</dbReference>
<dbReference type="GO" id="GO:0019843">
    <property type="term" value="F:rRNA binding"/>
    <property type="evidence" value="ECO:0007669"/>
    <property type="project" value="UniProtKB-UniRule"/>
</dbReference>
<dbReference type="GO" id="GO:0003735">
    <property type="term" value="F:structural constituent of ribosome"/>
    <property type="evidence" value="ECO:0007669"/>
    <property type="project" value="InterPro"/>
</dbReference>
<dbReference type="GO" id="GO:0016740">
    <property type="term" value="F:transferase activity"/>
    <property type="evidence" value="ECO:0007669"/>
    <property type="project" value="InterPro"/>
</dbReference>
<dbReference type="GO" id="GO:0002181">
    <property type="term" value="P:cytoplasmic translation"/>
    <property type="evidence" value="ECO:0007669"/>
    <property type="project" value="TreeGrafter"/>
</dbReference>
<dbReference type="FunFam" id="2.30.30.30:FF:000001">
    <property type="entry name" value="50S ribosomal protein L2"/>
    <property type="match status" value="1"/>
</dbReference>
<dbReference type="FunFam" id="2.40.50.140:FF:000003">
    <property type="entry name" value="50S ribosomal protein L2"/>
    <property type="match status" value="1"/>
</dbReference>
<dbReference type="FunFam" id="4.10.950.10:FF:000001">
    <property type="entry name" value="50S ribosomal protein L2"/>
    <property type="match status" value="1"/>
</dbReference>
<dbReference type="Gene3D" id="2.30.30.30">
    <property type="match status" value="1"/>
</dbReference>
<dbReference type="Gene3D" id="2.40.50.140">
    <property type="entry name" value="Nucleic acid-binding proteins"/>
    <property type="match status" value="1"/>
</dbReference>
<dbReference type="Gene3D" id="4.10.950.10">
    <property type="entry name" value="Ribosomal protein L2, domain 3"/>
    <property type="match status" value="1"/>
</dbReference>
<dbReference type="HAMAP" id="MF_01320_B">
    <property type="entry name" value="Ribosomal_uL2_B"/>
    <property type="match status" value="1"/>
</dbReference>
<dbReference type="InterPro" id="IPR012340">
    <property type="entry name" value="NA-bd_OB-fold"/>
</dbReference>
<dbReference type="InterPro" id="IPR014722">
    <property type="entry name" value="Rib_uL2_dom2"/>
</dbReference>
<dbReference type="InterPro" id="IPR002171">
    <property type="entry name" value="Ribosomal_uL2"/>
</dbReference>
<dbReference type="InterPro" id="IPR005880">
    <property type="entry name" value="Ribosomal_uL2_bac/org-type"/>
</dbReference>
<dbReference type="InterPro" id="IPR022669">
    <property type="entry name" value="Ribosomal_uL2_C"/>
</dbReference>
<dbReference type="InterPro" id="IPR022671">
    <property type="entry name" value="Ribosomal_uL2_CS"/>
</dbReference>
<dbReference type="InterPro" id="IPR014726">
    <property type="entry name" value="Ribosomal_uL2_dom3"/>
</dbReference>
<dbReference type="InterPro" id="IPR022666">
    <property type="entry name" value="Ribosomal_uL2_RNA-bd_dom"/>
</dbReference>
<dbReference type="InterPro" id="IPR008991">
    <property type="entry name" value="Translation_prot_SH3-like_sf"/>
</dbReference>
<dbReference type="NCBIfam" id="TIGR01171">
    <property type="entry name" value="rplB_bact"/>
    <property type="match status" value="1"/>
</dbReference>
<dbReference type="PANTHER" id="PTHR13691:SF5">
    <property type="entry name" value="LARGE RIBOSOMAL SUBUNIT PROTEIN UL2M"/>
    <property type="match status" value="1"/>
</dbReference>
<dbReference type="PANTHER" id="PTHR13691">
    <property type="entry name" value="RIBOSOMAL PROTEIN L2"/>
    <property type="match status" value="1"/>
</dbReference>
<dbReference type="Pfam" id="PF00181">
    <property type="entry name" value="Ribosomal_L2"/>
    <property type="match status" value="1"/>
</dbReference>
<dbReference type="Pfam" id="PF03947">
    <property type="entry name" value="Ribosomal_L2_C"/>
    <property type="match status" value="1"/>
</dbReference>
<dbReference type="PIRSF" id="PIRSF002158">
    <property type="entry name" value="Ribosomal_L2"/>
    <property type="match status" value="1"/>
</dbReference>
<dbReference type="SMART" id="SM01383">
    <property type="entry name" value="Ribosomal_L2"/>
    <property type="match status" value="1"/>
</dbReference>
<dbReference type="SMART" id="SM01382">
    <property type="entry name" value="Ribosomal_L2_C"/>
    <property type="match status" value="1"/>
</dbReference>
<dbReference type="SUPFAM" id="SSF50249">
    <property type="entry name" value="Nucleic acid-binding proteins"/>
    <property type="match status" value="1"/>
</dbReference>
<dbReference type="SUPFAM" id="SSF50104">
    <property type="entry name" value="Translation proteins SH3-like domain"/>
    <property type="match status" value="1"/>
</dbReference>
<dbReference type="PROSITE" id="PS00467">
    <property type="entry name" value="RIBOSOMAL_L2"/>
    <property type="match status" value="1"/>
</dbReference>
<evidence type="ECO:0000255" key="1">
    <source>
        <dbReference type="HAMAP-Rule" id="MF_01320"/>
    </source>
</evidence>
<evidence type="ECO:0000256" key="2">
    <source>
        <dbReference type="SAM" id="MobiDB-lite"/>
    </source>
</evidence>
<evidence type="ECO:0000305" key="3"/>
<organism>
    <name type="scientific">Shewanella sp. (strain W3-18-1)</name>
    <dbReference type="NCBI Taxonomy" id="351745"/>
    <lineage>
        <taxon>Bacteria</taxon>
        <taxon>Pseudomonadati</taxon>
        <taxon>Pseudomonadota</taxon>
        <taxon>Gammaproteobacteria</taxon>
        <taxon>Alteromonadales</taxon>
        <taxon>Shewanellaceae</taxon>
        <taxon>Shewanella</taxon>
    </lineage>
</organism>
<sequence length="274" mass="29955">MAVIKCKPTSPGRRHVVKVVNTDLHKGKPFAGLLAKKSKSGGRNNTGRITVRHVGGGHKQHYRLIDFKRDKDGIPAKIERLEYDPNRTANIALVLYADGERRYILAAKGMQAGDKIQSGVEAEIKTGNAMPLRNIPVGSVVHAVEMKPGKGAQIARSAGAYVQVVARDGAYATLRLRSGEMRKVPVDCRATFGEVGNAEHMLRQLGKAGAKRWRGIRPTVRGVAMNPVDHPHGGGEGRTSGGRHPVTPWGVPTKGYKTRSNKRTDKYIVRRRNK</sequence>
<comment type="function">
    <text evidence="1">One of the primary rRNA binding proteins. Required for association of the 30S and 50S subunits to form the 70S ribosome, for tRNA binding and peptide bond formation. It has been suggested to have peptidyltransferase activity; this is somewhat controversial. Makes several contacts with the 16S rRNA in the 70S ribosome.</text>
</comment>
<comment type="subunit">
    <text evidence="1">Part of the 50S ribosomal subunit. Forms a bridge to the 30S subunit in the 70S ribosome.</text>
</comment>
<comment type="similarity">
    <text evidence="1">Belongs to the universal ribosomal protein uL2 family.</text>
</comment>
<proteinExistence type="inferred from homology"/>